<protein>
    <recommendedName>
        <fullName evidence="1">Chaperone protein HtpG</fullName>
    </recommendedName>
    <alternativeName>
        <fullName evidence="1">Heat shock protein HtpG</fullName>
    </alternativeName>
    <alternativeName>
        <fullName evidence="1">High temperature protein G</fullName>
    </alternativeName>
</protein>
<keyword id="KW-0067">ATP-binding</keyword>
<keyword id="KW-0143">Chaperone</keyword>
<keyword id="KW-0963">Cytoplasm</keyword>
<keyword id="KW-0547">Nucleotide-binding</keyword>
<keyword id="KW-1185">Reference proteome</keyword>
<keyword id="KW-0346">Stress response</keyword>
<reference key="1">
    <citation type="journal article" date="2006" name="J. Bacteriol.">
        <title>Comparison of the genome sequence of the poultry pathogen Bordetella avium with those of B. bronchiseptica, B. pertussis, and B. parapertussis reveals extensive diversity in surface structures associated with host interaction.</title>
        <authorList>
            <person name="Sebaihia M."/>
            <person name="Preston A."/>
            <person name="Maskell D.J."/>
            <person name="Kuzmiak H."/>
            <person name="Connell T.D."/>
            <person name="King N.D."/>
            <person name="Orndorff P.E."/>
            <person name="Miyamoto D.M."/>
            <person name="Thomson N.R."/>
            <person name="Harris D."/>
            <person name="Goble A."/>
            <person name="Lord A."/>
            <person name="Murphy L."/>
            <person name="Quail M.A."/>
            <person name="Rutter S."/>
            <person name="Squares R."/>
            <person name="Squares S."/>
            <person name="Woodward J."/>
            <person name="Parkhill J."/>
            <person name="Temple L.M."/>
        </authorList>
    </citation>
    <scope>NUCLEOTIDE SEQUENCE [LARGE SCALE GENOMIC DNA]</scope>
    <source>
        <strain>197N</strain>
    </source>
</reference>
<dbReference type="EMBL" id="AM167904">
    <property type="protein sequence ID" value="CAJ48052.1"/>
    <property type="molecule type" value="Genomic_DNA"/>
</dbReference>
<dbReference type="RefSeq" id="WP_012416144.1">
    <property type="nucleotide sequence ID" value="NC_010645.1"/>
</dbReference>
<dbReference type="SMR" id="Q2KYY2"/>
<dbReference type="STRING" id="360910.BAV0447"/>
<dbReference type="KEGG" id="bav:BAV0447"/>
<dbReference type="eggNOG" id="COG0326">
    <property type="taxonomic scope" value="Bacteria"/>
</dbReference>
<dbReference type="HOGENOM" id="CLU_006684_3_0_4"/>
<dbReference type="OrthoDB" id="9802640at2"/>
<dbReference type="Proteomes" id="UP000001977">
    <property type="component" value="Chromosome"/>
</dbReference>
<dbReference type="GO" id="GO:0005737">
    <property type="term" value="C:cytoplasm"/>
    <property type="evidence" value="ECO:0007669"/>
    <property type="project" value="UniProtKB-SubCell"/>
</dbReference>
<dbReference type="GO" id="GO:0005524">
    <property type="term" value="F:ATP binding"/>
    <property type="evidence" value="ECO:0007669"/>
    <property type="project" value="UniProtKB-UniRule"/>
</dbReference>
<dbReference type="GO" id="GO:0016887">
    <property type="term" value="F:ATP hydrolysis activity"/>
    <property type="evidence" value="ECO:0007669"/>
    <property type="project" value="InterPro"/>
</dbReference>
<dbReference type="GO" id="GO:0140662">
    <property type="term" value="F:ATP-dependent protein folding chaperone"/>
    <property type="evidence" value="ECO:0007669"/>
    <property type="project" value="InterPro"/>
</dbReference>
<dbReference type="GO" id="GO:0051082">
    <property type="term" value="F:unfolded protein binding"/>
    <property type="evidence" value="ECO:0007669"/>
    <property type="project" value="UniProtKB-UniRule"/>
</dbReference>
<dbReference type="CDD" id="cd16927">
    <property type="entry name" value="HATPase_Hsp90-like"/>
    <property type="match status" value="1"/>
</dbReference>
<dbReference type="CDD" id="cd00385">
    <property type="entry name" value="Isoprenoid_Biosyn_C1"/>
    <property type="match status" value="1"/>
</dbReference>
<dbReference type="FunFam" id="3.30.230.80:FF:000002">
    <property type="entry name" value="Molecular chaperone HtpG"/>
    <property type="match status" value="1"/>
</dbReference>
<dbReference type="FunFam" id="3.30.565.10:FF:000009">
    <property type="entry name" value="Molecular chaperone HtpG"/>
    <property type="match status" value="1"/>
</dbReference>
<dbReference type="Gene3D" id="3.30.230.80">
    <property type="match status" value="1"/>
</dbReference>
<dbReference type="Gene3D" id="3.40.50.11260">
    <property type="match status" value="1"/>
</dbReference>
<dbReference type="Gene3D" id="1.20.120.790">
    <property type="entry name" value="Heat shock protein 90, C-terminal domain"/>
    <property type="match status" value="1"/>
</dbReference>
<dbReference type="Gene3D" id="3.30.565.10">
    <property type="entry name" value="Histidine kinase-like ATPase, C-terminal domain"/>
    <property type="match status" value="1"/>
</dbReference>
<dbReference type="HAMAP" id="MF_00505">
    <property type="entry name" value="HSP90"/>
    <property type="match status" value="1"/>
</dbReference>
<dbReference type="InterPro" id="IPR036890">
    <property type="entry name" value="HATPase_C_sf"/>
</dbReference>
<dbReference type="InterPro" id="IPR019805">
    <property type="entry name" value="Heat_shock_protein_90_CS"/>
</dbReference>
<dbReference type="InterPro" id="IPR037196">
    <property type="entry name" value="HSP90_C"/>
</dbReference>
<dbReference type="InterPro" id="IPR001404">
    <property type="entry name" value="Hsp90_fam"/>
</dbReference>
<dbReference type="InterPro" id="IPR020575">
    <property type="entry name" value="Hsp90_N"/>
</dbReference>
<dbReference type="InterPro" id="IPR020568">
    <property type="entry name" value="Ribosomal_Su5_D2-typ_SF"/>
</dbReference>
<dbReference type="NCBIfam" id="NF003555">
    <property type="entry name" value="PRK05218.1"/>
    <property type="match status" value="1"/>
</dbReference>
<dbReference type="PANTHER" id="PTHR11528">
    <property type="entry name" value="HEAT SHOCK PROTEIN 90 FAMILY MEMBER"/>
    <property type="match status" value="1"/>
</dbReference>
<dbReference type="Pfam" id="PF13589">
    <property type="entry name" value="HATPase_c_3"/>
    <property type="match status" value="1"/>
</dbReference>
<dbReference type="Pfam" id="PF00183">
    <property type="entry name" value="HSP90"/>
    <property type="match status" value="1"/>
</dbReference>
<dbReference type="PIRSF" id="PIRSF002583">
    <property type="entry name" value="Hsp90"/>
    <property type="match status" value="1"/>
</dbReference>
<dbReference type="PRINTS" id="PR00775">
    <property type="entry name" value="HEATSHOCK90"/>
</dbReference>
<dbReference type="SMART" id="SM00387">
    <property type="entry name" value="HATPase_c"/>
    <property type="match status" value="1"/>
</dbReference>
<dbReference type="SUPFAM" id="SSF55874">
    <property type="entry name" value="ATPase domain of HSP90 chaperone/DNA topoisomerase II/histidine kinase"/>
    <property type="match status" value="1"/>
</dbReference>
<dbReference type="SUPFAM" id="SSF110942">
    <property type="entry name" value="HSP90 C-terminal domain"/>
    <property type="match status" value="1"/>
</dbReference>
<dbReference type="SUPFAM" id="SSF54211">
    <property type="entry name" value="Ribosomal protein S5 domain 2-like"/>
    <property type="match status" value="1"/>
</dbReference>
<dbReference type="PROSITE" id="PS00298">
    <property type="entry name" value="HSP90"/>
    <property type="match status" value="1"/>
</dbReference>
<evidence type="ECO:0000255" key="1">
    <source>
        <dbReference type="HAMAP-Rule" id="MF_00505"/>
    </source>
</evidence>
<accession>Q2KYY2</accession>
<feature type="chain" id="PRO_0000236985" description="Chaperone protein HtpG">
    <location>
        <begin position="1"/>
        <end position="630"/>
    </location>
</feature>
<feature type="region of interest" description="A; substrate-binding" evidence="1">
    <location>
        <begin position="1"/>
        <end position="341"/>
    </location>
</feature>
<feature type="region of interest" description="B" evidence="1">
    <location>
        <begin position="342"/>
        <end position="558"/>
    </location>
</feature>
<feature type="region of interest" description="C" evidence="1">
    <location>
        <begin position="559"/>
        <end position="630"/>
    </location>
</feature>
<sequence length="630" mass="71099">MTQNATSETLGFQAEVKQLLHLMIHSLYSNKEIFLRELVSNASDACDKLRFEAIDQPELLAGDSELAIRVSYDKAARTITIADNGIGLSREEAIANLGTIARSGTREFFSQLTGDKQKDAQLIGQFGVGFYSSFIVADRVSVLSRRAGSDEAIRWESDGQGEFSIASAEKATRGTDVVLHLRADEDEFLNGWKLREVLRRYSDHISLPILMRKEEWDADKDEQVTRDEWETVNQANALWTRSKSEISDEQYREFYKTVSHGFDEPLAWTHNRVEGRSEYTQLLYVPRQAPFDLWDRDARRGVKLYVKRVFIMDDAEQLLPAYLRFVRGVIDSADLPLNVSREILQESRDVRAIREGSAKRILSLLEDLAENRKDDYAVFWGEFGQVLKEGVGEDPSNQERIAKLLRFASTHAGDASQTTSLQDYLGRLKEGQDKIYYVTADSYSAASNSPHLEIFRKKGIEVLLLWDRVDEWMLSHLREFEGKSLVSVAKGGLDLADLADEEEKKKQTEVAESFKPLIERLQTALGEQVKEVRVTLRLVDSPACVVVGQNDLSPHLLRMLKAAGQEVPEVKPVLEINPEHALIARIRDVSDADFGAWAQLLLDQALLAEGAQIADPAAFVKRLNALLLKV</sequence>
<organism>
    <name type="scientific">Bordetella avium (strain 197N)</name>
    <dbReference type="NCBI Taxonomy" id="360910"/>
    <lineage>
        <taxon>Bacteria</taxon>
        <taxon>Pseudomonadati</taxon>
        <taxon>Pseudomonadota</taxon>
        <taxon>Betaproteobacteria</taxon>
        <taxon>Burkholderiales</taxon>
        <taxon>Alcaligenaceae</taxon>
        <taxon>Bordetella</taxon>
    </lineage>
</organism>
<proteinExistence type="inferred from homology"/>
<gene>
    <name evidence="1" type="primary">htpG</name>
    <name type="ordered locus">BAV0447</name>
</gene>
<name>HTPG_BORA1</name>
<comment type="function">
    <text evidence="1">Molecular chaperone. Has ATPase activity.</text>
</comment>
<comment type="subunit">
    <text evidence="1">Homodimer.</text>
</comment>
<comment type="subcellular location">
    <subcellularLocation>
        <location evidence="1">Cytoplasm</location>
    </subcellularLocation>
</comment>
<comment type="similarity">
    <text evidence="1">Belongs to the heat shock protein 90 family.</text>
</comment>